<proteinExistence type="inferred from homology"/>
<reference key="1">
    <citation type="journal article" date="2007" name="PLoS Genet.">
        <title>Patterns and implications of gene gain and loss in the evolution of Prochlorococcus.</title>
        <authorList>
            <person name="Kettler G.C."/>
            <person name="Martiny A.C."/>
            <person name="Huang K."/>
            <person name="Zucker J."/>
            <person name="Coleman M.L."/>
            <person name="Rodrigue S."/>
            <person name="Chen F."/>
            <person name="Lapidus A."/>
            <person name="Ferriera S."/>
            <person name="Johnson J."/>
            <person name="Steglich C."/>
            <person name="Church G.M."/>
            <person name="Richardson P."/>
            <person name="Chisholm S.W."/>
        </authorList>
    </citation>
    <scope>NUCLEOTIDE SEQUENCE [LARGE SCALE GENOMIC DNA]</scope>
    <source>
        <strain>MIT 9515</strain>
    </source>
</reference>
<organism>
    <name type="scientific">Prochlorococcus marinus (strain MIT 9515)</name>
    <dbReference type="NCBI Taxonomy" id="167542"/>
    <lineage>
        <taxon>Bacteria</taxon>
        <taxon>Bacillati</taxon>
        <taxon>Cyanobacteriota</taxon>
        <taxon>Cyanophyceae</taxon>
        <taxon>Synechococcales</taxon>
        <taxon>Prochlorococcaceae</taxon>
        <taxon>Prochlorococcus</taxon>
    </lineage>
</organism>
<name>GLGB_PROM5</name>
<sequence>MKETIQTDWIKSEAFNLENCCNDNPLNILGPHFFKGKWVTRVWMPEADEVNITFKDKTYKTTTPNHKWMFEAILHEDPKNNYQINVLRGGVSHSQQDPWAFKDEWMGEVDRHLFAEGNHHHIWKKMGAHISEDINQKGVMFCIWAPNAKSISIIGDINSWDGRHHPMQKRLGGVWELFMPILKEGDVYKYEIRTQQGHIYEKADPYGFLHEVRPQNGSIISKLNNFNWEDSSWITSRDSSSQINKPISVYEMHLGSWMHDSTDNKYIEKNGNPRHPVPAADLKPGTRFLTYPELTEKLIPYVKERGFTHIELMPISEHPFDGSWGYQVTGWYAPTSRYGTPNEFKEFINKCHAEGIGVILDWVPGHFPKDKHGLAFFDGCHLYEHGDPRIGEHKEWGTLIFNYSRNEVRNFLVANLIYWFEEFHIDGIRVDAVASMLYRDYLRPEGEWIPNENGGNENLEAVKFLQQANHVLFQHFPGALSIAEESTTWPMVTEPTNVGGLGFNLKWNMGWMHDMLDYFEIDPWFRQFHQNSVTFSITYNYTENFMLALSHDEVVHGKSHLLHKMPGDDWKKFANTRALLTYMWTHPGKKTIFMGMEFGQRQEWNVWDDLQWELLEYEPHKGIRNLIDDLNKLYKNEPSLWKNDFDPYGFQWIDCDDTSNSVISFMRRENESNEWLVVIANFTPNFHESYKIGVPLEGYYKEIFNSDGSKYGGSNKGNMGGKDTLKYNIHNYENALEIALPPLSVSIFKHQLKK</sequence>
<evidence type="ECO:0000255" key="1">
    <source>
        <dbReference type="HAMAP-Rule" id="MF_00685"/>
    </source>
</evidence>
<keyword id="KW-0119">Carbohydrate metabolism</keyword>
<keyword id="KW-0320">Glycogen biosynthesis</keyword>
<keyword id="KW-0321">Glycogen metabolism</keyword>
<keyword id="KW-0328">Glycosyltransferase</keyword>
<keyword id="KW-0808">Transferase</keyword>
<dbReference type="EC" id="2.4.1.18" evidence="1"/>
<dbReference type="EMBL" id="CP000552">
    <property type="protein sequence ID" value="ABM71858.1"/>
    <property type="molecule type" value="Genomic_DNA"/>
</dbReference>
<dbReference type="RefSeq" id="WP_011819963.1">
    <property type="nucleotide sequence ID" value="NC_008817.1"/>
</dbReference>
<dbReference type="SMR" id="A2BVP7"/>
<dbReference type="STRING" id="167542.P9515_06491"/>
<dbReference type="CAZy" id="CBM48">
    <property type="family name" value="Carbohydrate-Binding Module Family 48"/>
</dbReference>
<dbReference type="CAZy" id="GH13">
    <property type="family name" value="Glycoside Hydrolase Family 13"/>
</dbReference>
<dbReference type="GeneID" id="60200872"/>
<dbReference type="KEGG" id="pmc:P9515_06491"/>
<dbReference type="eggNOG" id="COG0296">
    <property type="taxonomic scope" value="Bacteria"/>
</dbReference>
<dbReference type="HOGENOM" id="CLU_004245_3_2_3"/>
<dbReference type="OrthoDB" id="9800174at2"/>
<dbReference type="UniPathway" id="UPA00164"/>
<dbReference type="Proteomes" id="UP000001589">
    <property type="component" value="Chromosome"/>
</dbReference>
<dbReference type="GO" id="GO:0005829">
    <property type="term" value="C:cytosol"/>
    <property type="evidence" value="ECO:0007669"/>
    <property type="project" value="TreeGrafter"/>
</dbReference>
<dbReference type="GO" id="GO:0003844">
    <property type="term" value="F:1,4-alpha-glucan branching enzyme activity"/>
    <property type="evidence" value="ECO:0007669"/>
    <property type="project" value="UniProtKB-UniRule"/>
</dbReference>
<dbReference type="GO" id="GO:0043169">
    <property type="term" value="F:cation binding"/>
    <property type="evidence" value="ECO:0007669"/>
    <property type="project" value="InterPro"/>
</dbReference>
<dbReference type="GO" id="GO:0004553">
    <property type="term" value="F:hydrolase activity, hydrolyzing O-glycosyl compounds"/>
    <property type="evidence" value="ECO:0007669"/>
    <property type="project" value="InterPro"/>
</dbReference>
<dbReference type="GO" id="GO:0005978">
    <property type="term" value="P:glycogen biosynthetic process"/>
    <property type="evidence" value="ECO:0007669"/>
    <property type="project" value="UniProtKB-UniRule"/>
</dbReference>
<dbReference type="CDD" id="cd11322">
    <property type="entry name" value="AmyAc_Glg_BE"/>
    <property type="match status" value="1"/>
</dbReference>
<dbReference type="CDD" id="cd02855">
    <property type="entry name" value="E_set_GBE_prok_N"/>
    <property type="match status" value="1"/>
</dbReference>
<dbReference type="FunFam" id="2.60.40.10:FF:000169">
    <property type="entry name" value="1,4-alpha-glucan branching enzyme GlgB"/>
    <property type="match status" value="1"/>
</dbReference>
<dbReference type="FunFam" id="2.60.40.1180:FF:000002">
    <property type="entry name" value="1,4-alpha-glucan branching enzyme GlgB"/>
    <property type="match status" value="1"/>
</dbReference>
<dbReference type="FunFam" id="3.20.20.80:FF:000003">
    <property type="entry name" value="1,4-alpha-glucan branching enzyme GlgB"/>
    <property type="match status" value="1"/>
</dbReference>
<dbReference type="Gene3D" id="3.20.20.80">
    <property type="entry name" value="Glycosidases"/>
    <property type="match status" value="1"/>
</dbReference>
<dbReference type="Gene3D" id="2.60.40.1180">
    <property type="entry name" value="Golgi alpha-mannosidase II"/>
    <property type="match status" value="1"/>
</dbReference>
<dbReference type="Gene3D" id="2.60.40.10">
    <property type="entry name" value="Immunoglobulins"/>
    <property type="match status" value="2"/>
</dbReference>
<dbReference type="HAMAP" id="MF_00685">
    <property type="entry name" value="GlgB"/>
    <property type="match status" value="1"/>
</dbReference>
<dbReference type="InterPro" id="IPR006048">
    <property type="entry name" value="A-amylase/branching_C"/>
</dbReference>
<dbReference type="InterPro" id="IPR037439">
    <property type="entry name" value="Branching_enzy"/>
</dbReference>
<dbReference type="InterPro" id="IPR006407">
    <property type="entry name" value="GlgB"/>
</dbReference>
<dbReference type="InterPro" id="IPR054169">
    <property type="entry name" value="GlgB_N"/>
</dbReference>
<dbReference type="InterPro" id="IPR044143">
    <property type="entry name" value="GlgB_N_E_set_prok"/>
</dbReference>
<dbReference type="InterPro" id="IPR006047">
    <property type="entry name" value="Glyco_hydro_13_cat_dom"/>
</dbReference>
<dbReference type="InterPro" id="IPR004193">
    <property type="entry name" value="Glyco_hydro_13_N"/>
</dbReference>
<dbReference type="InterPro" id="IPR013780">
    <property type="entry name" value="Glyco_hydro_b"/>
</dbReference>
<dbReference type="InterPro" id="IPR017853">
    <property type="entry name" value="Glycoside_hydrolase_SF"/>
</dbReference>
<dbReference type="InterPro" id="IPR013783">
    <property type="entry name" value="Ig-like_fold"/>
</dbReference>
<dbReference type="InterPro" id="IPR014756">
    <property type="entry name" value="Ig_E-set"/>
</dbReference>
<dbReference type="NCBIfam" id="TIGR01515">
    <property type="entry name" value="branching_enzym"/>
    <property type="match status" value="1"/>
</dbReference>
<dbReference type="NCBIfam" id="NF003811">
    <property type="entry name" value="PRK05402.1"/>
    <property type="match status" value="1"/>
</dbReference>
<dbReference type="NCBIfam" id="NF008967">
    <property type="entry name" value="PRK12313.1"/>
    <property type="match status" value="1"/>
</dbReference>
<dbReference type="PANTHER" id="PTHR43651">
    <property type="entry name" value="1,4-ALPHA-GLUCAN-BRANCHING ENZYME"/>
    <property type="match status" value="1"/>
</dbReference>
<dbReference type="PANTHER" id="PTHR43651:SF3">
    <property type="entry name" value="1,4-ALPHA-GLUCAN-BRANCHING ENZYME"/>
    <property type="match status" value="1"/>
</dbReference>
<dbReference type="Pfam" id="PF00128">
    <property type="entry name" value="Alpha-amylase"/>
    <property type="match status" value="2"/>
</dbReference>
<dbReference type="Pfam" id="PF02806">
    <property type="entry name" value="Alpha-amylase_C"/>
    <property type="match status" value="1"/>
</dbReference>
<dbReference type="Pfam" id="PF02922">
    <property type="entry name" value="CBM_48"/>
    <property type="match status" value="1"/>
</dbReference>
<dbReference type="Pfam" id="PF22019">
    <property type="entry name" value="GlgB_N"/>
    <property type="match status" value="1"/>
</dbReference>
<dbReference type="PIRSF" id="PIRSF000463">
    <property type="entry name" value="GlgB"/>
    <property type="match status" value="1"/>
</dbReference>
<dbReference type="SMART" id="SM00642">
    <property type="entry name" value="Aamy"/>
    <property type="match status" value="1"/>
</dbReference>
<dbReference type="SUPFAM" id="SSF51445">
    <property type="entry name" value="(Trans)glycosidases"/>
    <property type="match status" value="1"/>
</dbReference>
<dbReference type="SUPFAM" id="SSF81296">
    <property type="entry name" value="E set domains"/>
    <property type="match status" value="2"/>
</dbReference>
<dbReference type="SUPFAM" id="SSF51011">
    <property type="entry name" value="Glycosyl hydrolase domain"/>
    <property type="match status" value="1"/>
</dbReference>
<comment type="function">
    <text evidence="1">Catalyzes the formation of the alpha-1,6-glucosidic linkages in glycogen by scission of a 1,4-alpha-linked oligosaccharide from growing alpha-1,4-glucan chains and the subsequent attachment of the oligosaccharide to the alpha-1,6 position.</text>
</comment>
<comment type="catalytic activity">
    <reaction evidence="1">
        <text>Transfers a segment of a (1-&gt;4)-alpha-D-glucan chain to a primary hydroxy group in a similar glucan chain.</text>
        <dbReference type="EC" id="2.4.1.18"/>
    </reaction>
</comment>
<comment type="pathway">
    <text evidence="1">Glycan biosynthesis; glycogen biosynthesis.</text>
</comment>
<comment type="subunit">
    <text evidence="1">Monomer.</text>
</comment>
<comment type="similarity">
    <text evidence="1">Belongs to the glycosyl hydrolase 13 family. GlgB subfamily.</text>
</comment>
<accession>A2BVP7</accession>
<protein>
    <recommendedName>
        <fullName evidence="1">1,4-alpha-glucan branching enzyme GlgB</fullName>
        <ecNumber evidence="1">2.4.1.18</ecNumber>
    </recommendedName>
    <alternativeName>
        <fullName evidence="1">1,4-alpha-D-glucan:1,4-alpha-D-glucan 6-glucosyl-transferase</fullName>
    </alternativeName>
    <alternativeName>
        <fullName evidence="1">Alpha-(1-&gt;4)-glucan branching enzyme</fullName>
    </alternativeName>
    <alternativeName>
        <fullName evidence="1">Glycogen branching enzyme</fullName>
        <shortName evidence="1">BE</shortName>
    </alternativeName>
</protein>
<gene>
    <name evidence="1" type="primary">glgB</name>
    <name type="ordered locus">P9515_06491</name>
</gene>
<feature type="chain" id="PRO_1000044991" description="1,4-alpha-glucan branching enzyme GlgB">
    <location>
        <begin position="1"/>
        <end position="754"/>
    </location>
</feature>
<feature type="active site" description="Nucleophile" evidence="1">
    <location>
        <position position="431"/>
    </location>
</feature>
<feature type="active site" description="Proton donor" evidence="1">
    <location>
        <position position="484"/>
    </location>
</feature>